<accession>P85560</accession>
<evidence type="ECO:0000250" key="1">
    <source>
        <dbReference type="UniProtKB" id="P41493"/>
    </source>
</evidence>
<evidence type="ECO:0000255" key="2"/>
<evidence type="ECO:0000269" key="3">
    <source>
    </source>
</evidence>
<evidence type="ECO:0000303" key="4">
    <source>
    </source>
</evidence>
<evidence type="ECO:0000305" key="5"/>
<sequence>EQFDDYGHMRF</sequence>
<reference evidence="5" key="1">
    <citation type="journal article" date="2009" name="BMC Evol. Biol.">
        <title>A proteomic approach for studying insect phylogeny: CAPA peptides of ancient insect taxa (Dictyoptera, Blattoptera) as a test case.</title>
        <authorList>
            <person name="Roth S."/>
            <person name="Fromm B."/>
            <person name="Gaede G."/>
            <person name="Predel R."/>
        </authorList>
    </citation>
    <scope>PROTEIN SEQUENCE</scope>
    <scope>AMIDATION AT PHE-11</scope>
    <source>
        <tissue evidence="3">Corpora cardiaca</tissue>
    </source>
</reference>
<keyword id="KW-0027">Amidation</keyword>
<keyword id="KW-0903">Direct protein sequencing</keyword>
<keyword id="KW-0372">Hormone</keyword>
<keyword id="KW-0527">Neuropeptide</keyword>
<keyword id="KW-0964">Secreted</keyword>
<keyword id="KW-0765">Sulfation</keyword>
<feature type="peptide" id="PRO_0000378864" description="Sulfakinin-1" evidence="3">
    <location>
        <begin position="1"/>
        <end position="11"/>
    </location>
</feature>
<feature type="modified residue" description="Sulfotyrosine" evidence="1">
    <location>
        <position position="6"/>
    </location>
</feature>
<feature type="modified residue" description="Phenylalanine amide" evidence="3">
    <location>
        <position position="11"/>
    </location>
</feature>
<organism>
    <name type="scientific">Blatta orientalis</name>
    <name type="common">Oriental cockroach</name>
    <dbReference type="NCBI Taxonomy" id="6976"/>
    <lineage>
        <taxon>Eukaryota</taxon>
        <taxon>Metazoa</taxon>
        <taxon>Ecdysozoa</taxon>
        <taxon>Arthropoda</taxon>
        <taxon>Hexapoda</taxon>
        <taxon>Insecta</taxon>
        <taxon>Pterygota</taxon>
        <taxon>Neoptera</taxon>
        <taxon>Polyneoptera</taxon>
        <taxon>Dictyoptera</taxon>
        <taxon>Blattodea</taxon>
        <taxon>Blattoidea</taxon>
        <taxon>Blattidae</taxon>
        <taxon>Blattinae</taxon>
        <taxon>Blatta</taxon>
    </lineage>
</organism>
<dbReference type="GO" id="GO:0005576">
    <property type="term" value="C:extracellular region"/>
    <property type="evidence" value="ECO:0007669"/>
    <property type="project" value="UniProtKB-SubCell"/>
</dbReference>
<dbReference type="GO" id="GO:0005179">
    <property type="term" value="F:hormone activity"/>
    <property type="evidence" value="ECO:0007669"/>
    <property type="project" value="UniProtKB-KW"/>
</dbReference>
<dbReference type="GO" id="GO:0007218">
    <property type="term" value="P:neuropeptide signaling pathway"/>
    <property type="evidence" value="ECO:0007669"/>
    <property type="project" value="UniProtKB-KW"/>
</dbReference>
<dbReference type="InterPro" id="IPR013152">
    <property type="entry name" value="Gastrin/cholecystokinin_CS"/>
</dbReference>
<dbReference type="InterPro" id="IPR013259">
    <property type="entry name" value="Sulfakinin"/>
</dbReference>
<dbReference type="Pfam" id="PF08257">
    <property type="entry name" value="Sulfakinin"/>
    <property type="match status" value="1"/>
</dbReference>
<dbReference type="PROSITE" id="PS00259">
    <property type="entry name" value="GASTRIN"/>
    <property type="match status" value="1"/>
</dbReference>
<comment type="function">
    <text evidence="1">Myotropic peptide.</text>
</comment>
<comment type="subcellular location">
    <subcellularLocation>
        <location evidence="5">Secreted</location>
    </subcellularLocation>
</comment>
<comment type="similarity">
    <text evidence="2">Belongs to the gastrin/cholecystokinin family.</text>
</comment>
<name>SK1_BLAOR</name>
<protein>
    <recommendedName>
        <fullName evidence="4">Sulfakinin-1</fullName>
        <shortName evidence="4">BlaOr-SK-1</shortName>
    </recommendedName>
</protein>
<proteinExistence type="evidence at protein level"/>